<reference key="1">
    <citation type="journal article" date="2015" name="ACS Synth. Biol.">
        <title>Native promoter strategy for high-yielding synthesis and engineering of fungal secondary metabolites.</title>
        <authorList>
            <person name="Kakule T.B."/>
            <person name="Jadulco R.C."/>
            <person name="Koch M."/>
            <person name="Janso J.E."/>
            <person name="Barrows L.R."/>
            <person name="Schmidt E.W."/>
        </authorList>
    </citation>
    <scope>NUCLEOTIDE SEQUENCE [GENOMIC DNA]</scope>
    <scope>FUNCTION</scope>
</reference>
<accession>A0A089GT84</accession>
<name>PRLF_FUNXX</name>
<dbReference type="EMBL" id="KM107910">
    <property type="protein sequence ID" value="AIP87506.1"/>
    <property type="molecule type" value="Genomic_DNA"/>
</dbReference>
<dbReference type="SMR" id="A0A089GT84"/>
<dbReference type="GO" id="GO:0005634">
    <property type="term" value="C:nucleus"/>
    <property type="evidence" value="ECO:0007669"/>
    <property type="project" value="UniProtKB-SubCell"/>
</dbReference>
<dbReference type="GO" id="GO:0003677">
    <property type="term" value="F:DNA binding"/>
    <property type="evidence" value="ECO:0007669"/>
    <property type="project" value="UniProtKB-KW"/>
</dbReference>
<dbReference type="GO" id="GO:0000981">
    <property type="term" value="F:DNA-binding transcription factor activity, RNA polymerase II-specific"/>
    <property type="evidence" value="ECO:0007669"/>
    <property type="project" value="InterPro"/>
</dbReference>
<dbReference type="GO" id="GO:0008270">
    <property type="term" value="F:zinc ion binding"/>
    <property type="evidence" value="ECO:0007669"/>
    <property type="project" value="InterPro"/>
</dbReference>
<dbReference type="CDD" id="cd00067">
    <property type="entry name" value="GAL4"/>
    <property type="match status" value="1"/>
</dbReference>
<dbReference type="Gene3D" id="4.10.240.10">
    <property type="entry name" value="Zn(2)-C6 fungal-type DNA-binding domain"/>
    <property type="match status" value="1"/>
</dbReference>
<dbReference type="InterPro" id="IPR036864">
    <property type="entry name" value="Zn2-C6_fun-type_DNA-bd_sf"/>
</dbReference>
<dbReference type="InterPro" id="IPR001138">
    <property type="entry name" value="Zn2Cys6_DnaBD"/>
</dbReference>
<dbReference type="SUPFAM" id="SSF57701">
    <property type="entry name" value="Zn2/Cys6 DNA-binding domain"/>
    <property type="match status" value="1"/>
</dbReference>
<dbReference type="PROSITE" id="PS00463">
    <property type="entry name" value="ZN2_CY6_FUNGAL_1"/>
    <property type="match status" value="1"/>
</dbReference>
<dbReference type="PROSITE" id="PS50048">
    <property type="entry name" value="ZN2_CY6_FUNGAL_2"/>
    <property type="match status" value="1"/>
</dbReference>
<sequence>MALSPSSDAILSIRSSCDRCRSQKLKCIVIETPSGTACCQRCARAMVPCIFGRRSRSKRTTTTTTTTTTDSGRKQRRREPAAALNVLDSCAAPELAASSSSTNAHFPRGINGGMGIPEDRENQETGTFPFYAGCYGGSAPVTSAVEVIQGRKDPDRNLFRYAFQEESTIGDLGLFTHDMSLFGQTLDDASLANTEVMPPSLTESDGISSPGESAPFRVHLPLSEPGVAARVLLSFASDLHERLETLQNGPWQQEESSMGLDGYPIGSVLHLSLTLTDLGVALQKARSNDDASVSASSHKMDDGQTERVNPNSTQAGGISTSTTTEPPCYDTSVSLMLLSCYVTLLRVCTVVLGNFQTYLHLQPRARPKASPASIYPSSASCLGDLLPINQPHHRIHAAVCLLLDSLEQVEEALSLPYQVRCASAVQASSDPGSCTPSEAKPFSDAPAGAAGRDSATTLIHWGFQTSAAGMQDASSELRQKVEGVKEMLRQQMGL</sequence>
<evidence type="ECO:0000255" key="1">
    <source>
        <dbReference type="PROSITE-ProRule" id="PRU00227"/>
    </source>
</evidence>
<evidence type="ECO:0000256" key="2">
    <source>
        <dbReference type="SAM" id="MobiDB-lite"/>
    </source>
</evidence>
<evidence type="ECO:0000303" key="3">
    <source>
    </source>
</evidence>
<evidence type="ECO:0000305" key="4">
    <source>
    </source>
</evidence>
<protein>
    <recommendedName>
        <fullName evidence="3">Pyrrolocin cluster transcription factor fsdR</fullName>
    </recommendedName>
    <alternativeName>
        <fullName evidence="3">Pyrrolocin biosynthesis protein R</fullName>
    </alternativeName>
</protein>
<proteinExistence type="inferred from homology"/>
<organism>
    <name type="scientific">Fungal sp. (strain NRRL 50135)</name>
    <dbReference type="NCBI Taxonomy" id="1547289"/>
    <lineage>
        <taxon>Eukaryota</taxon>
        <taxon>Fungi</taxon>
    </lineage>
</organism>
<comment type="function">
    <text evidence="4">Transcription factor that regulates the expression of the gene cluster that mediates the biosynthesis of pyrrolocin (PubMed:25226362).</text>
</comment>
<comment type="subcellular location">
    <subcellularLocation>
        <location evidence="1">Nucleus</location>
    </subcellularLocation>
</comment>
<keyword id="KW-0238">DNA-binding</keyword>
<keyword id="KW-0479">Metal-binding</keyword>
<keyword id="KW-0539">Nucleus</keyword>
<keyword id="KW-0804">Transcription</keyword>
<keyword id="KW-0805">Transcription regulation</keyword>
<keyword id="KW-0862">Zinc</keyword>
<feature type="chain" id="PRO_0000441308" description="Pyrrolocin cluster transcription factor fsdR">
    <location>
        <begin position="1"/>
        <end position="494"/>
    </location>
</feature>
<feature type="DNA-binding region" description="Zn(2)-C6 fungal-type" evidence="1">
    <location>
        <begin position="17"/>
        <end position="49"/>
    </location>
</feature>
<feature type="region of interest" description="Disordered" evidence="2">
    <location>
        <begin position="57"/>
        <end position="79"/>
    </location>
</feature>
<feature type="region of interest" description="Disordered" evidence="2">
    <location>
        <begin position="287"/>
        <end position="323"/>
    </location>
</feature>
<feature type="region of interest" description="Disordered" evidence="2">
    <location>
        <begin position="429"/>
        <end position="449"/>
    </location>
</feature>
<feature type="compositionally biased region" description="Low complexity" evidence="2">
    <location>
        <begin position="60"/>
        <end position="69"/>
    </location>
</feature>
<feature type="compositionally biased region" description="Polar residues" evidence="2">
    <location>
        <begin position="306"/>
        <end position="323"/>
    </location>
</feature>
<gene>
    <name evidence="3" type="primary">prlF</name>
</gene>